<keyword id="KW-0342">GTP-binding</keyword>
<keyword id="KW-0378">Hydrolase</keyword>
<keyword id="KW-0547">Nucleotide-binding</keyword>
<proteinExistence type="inferred from homology"/>
<gene>
    <name evidence="1" type="primary">gch3</name>
    <name type="ordered locus">LS215_1832</name>
</gene>
<organism>
    <name type="scientific">Saccharolobus islandicus (strain L.S.2.15 / Lassen #1)</name>
    <name type="common">Sulfolobus islandicus</name>
    <dbReference type="NCBI Taxonomy" id="429572"/>
    <lineage>
        <taxon>Archaea</taxon>
        <taxon>Thermoproteota</taxon>
        <taxon>Thermoprotei</taxon>
        <taxon>Sulfolobales</taxon>
        <taxon>Sulfolobaceae</taxon>
        <taxon>Saccharolobus</taxon>
    </lineage>
</organism>
<name>GCH3_SACI2</name>
<dbReference type="EC" id="3.5.4.29" evidence="1"/>
<dbReference type="EMBL" id="CP001399">
    <property type="protein sequence ID" value="ACP35828.1"/>
    <property type="molecule type" value="Genomic_DNA"/>
</dbReference>
<dbReference type="RefSeq" id="WP_012713918.1">
    <property type="nucleotide sequence ID" value="NC_012589.1"/>
</dbReference>
<dbReference type="SMR" id="C3MR15"/>
<dbReference type="GeneID" id="7799471"/>
<dbReference type="KEGG" id="sis:LS215_1832"/>
<dbReference type="HOGENOM" id="CLU_080076_0_0_2"/>
<dbReference type="OrthoDB" id="25211at2157"/>
<dbReference type="Proteomes" id="UP000001747">
    <property type="component" value="Chromosome"/>
</dbReference>
<dbReference type="GO" id="GO:0005525">
    <property type="term" value="F:GTP binding"/>
    <property type="evidence" value="ECO:0007669"/>
    <property type="project" value="UniProtKB-KW"/>
</dbReference>
<dbReference type="GO" id="GO:0043740">
    <property type="term" value="F:GTP cyclohydrolase IIa activity"/>
    <property type="evidence" value="ECO:0007669"/>
    <property type="project" value="UniProtKB-EC"/>
</dbReference>
<dbReference type="GO" id="GO:0009058">
    <property type="term" value="P:biosynthetic process"/>
    <property type="evidence" value="ECO:0007669"/>
    <property type="project" value="InterPro"/>
</dbReference>
<dbReference type="Gene3D" id="3.30.70.270">
    <property type="match status" value="1"/>
</dbReference>
<dbReference type="Gene3D" id="3.30.70.1230">
    <property type="entry name" value="Nucleotide cyclase"/>
    <property type="match status" value="1"/>
</dbReference>
<dbReference type="HAMAP" id="MF_00608">
    <property type="entry name" value="GTP_cyclohydro_3"/>
    <property type="match status" value="1"/>
</dbReference>
<dbReference type="InterPro" id="IPR007839">
    <property type="entry name" value="GTP_CycHdrlase_3"/>
</dbReference>
<dbReference type="InterPro" id="IPR029787">
    <property type="entry name" value="Nucleotide_cyclase"/>
</dbReference>
<dbReference type="InterPro" id="IPR043128">
    <property type="entry name" value="Rev_trsase/Diguanyl_cyclase"/>
</dbReference>
<dbReference type="PANTHER" id="PTHR42202">
    <property type="entry name" value="GTP CYCLOHYDROLASE III"/>
    <property type="match status" value="1"/>
</dbReference>
<dbReference type="PANTHER" id="PTHR42202:SF1">
    <property type="entry name" value="GTP CYCLOHYDROLASE III"/>
    <property type="match status" value="1"/>
</dbReference>
<dbReference type="Pfam" id="PF05165">
    <property type="entry name" value="GCH_III"/>
    <property type="match status" value="1"/>
</dbReference>
<dbReference type="PIRSF" id="PIRSF009265">
    <property type="entry name" value="GTP_cyclohydro_3"/>
    <property type="match status" value="1"/>
</dbReference>
<comment type="function">
    <text evidence="1">Catalyzes the formation of 2-amino-5-formylamino-6-ribofuranosylamino-4(3H)-pyrimidinone ribonucleotide monophosphate and inorganic phosphate from GTP. Also has an independent pyrophosphate phosphohydrolase activity.</text>
</comment>
<comment type="catalytic activity">
    <reaction evidence="1">
        <text>GTP + 3 H2O = 2-amino-5-formylamino-6-(5-phospho-D-ribosylamino)pyrimidin-4(3H)-one + 2 phosphate + 2 H(+)</text>
        <dbReference type="Rhea" id="RHEA:22468"/>
        <dbReference type="ChEBI" id="CHEBI:15377"/>
        <dbReference type="ChEBI" id="CHEBI:15378"/>
        <dbReference type="ChEBI" id="CHEBI:37565"/>
        <dbReference type="ChEBI" id="CHEBI:43474"/>
        <dbReference type="ChEBI" id="CHEBI:57258"/>
        <dbReference type="EC" id="3.5.4.29"/>
    </reaction>
</comment>
<comment type="similarity">
    <text evidence="1">Belongs to the archaeal-type GTP cyclohydrolase family.</text>
</comment>
<accession>C3MR15</accession>
<sequence length="232" mass="27068">MKVLAIKLVDYREWTERLGYDREWLIQKIQNKFMMKIHEIASQYSTFPLQLRFDNFLMIVDGITNTQLIYMINDMQENLPVGIKTCLGYGKTPLEAQWNASVCLNNKEDKFKEYVDEKIAALHFDINFNTEALKYTSVYDSFLEITNIYVDLSRFLYKIGGILQYLGGDNYLGFVSTNSVNKVIEKFSDDNKIKVGIGIGQNARTAIKLATTSLEKIRNNREKTWHIEEEYH</sequence>
<protein>
    <recommendedName>
        <fullName evidence="1">GTP cyclohydrolase III</fullName>
        <ecNumber evidence="1">3.5.4.29</ecNumber>
    </recommendedName>
</protein>
<feature type="chain" id="PRO_1000212261" description="GTP cyclohydrolase III">
    <location>
        <begin position="1"/>
        <end position="232"/>
    </location>
</feature>
<evidence type="ECO:0000255" key="1">
    <source>
        <dbReference type="HAMAP-Rule" id="MF_00608"/>
    </source>
</evidence>
<reference key="1">
    <citation type="journal article" date="2009" name="Proc. Natl. Acad. Sci. U.S.A.">
        <title>Biogeography of the Sulfolobus islandicus pan-genome.</title>
        <authorList>
            <person name="Reno M.L."/>
            <person name="Held N.L."/>
            <person name="Fields C.J."/>
            <person name="Burke P.V."/>
            <person name="Whitaker R.J."/>
        </authorList>
    </citation>
    <scope>NUCLEOTIDE SEQUENCE [LARGE SCALE GENOMIC DNA]</scope>
    <source>
        <strain>L.S.2.15 / Lassen #1</strain>
    </source>
</reference>